<sequence>MGAWSGFGITFETMFRKSFTQGYPEKGKEKPMPPRMHGRHQLNRWPDGLEKCVGCELCAWACPADAIYVEGADNTDEERYSPGERYGRVYEINYLRCILCGMCIEACPTRALTMTNDFKMADTSRAKHIWTKDELLAPLKEGMEQPPHPRRLGDDEDDYFNGLPPSGQDDVRTGPANSGATAHRDDDNDTQHKDEEAA</sequence>
<comment type="function">
    <text evidence="1">NDH-1 shuttles electrons from NADH, via FMN and iron-sulfur (Fe-S) centers, to quinones in the respiratory chain. The immediate electron acceptor for the enzyme in this species is believed to be ubiquinone. Couples the redox reaction to proton translocation (for every two electrons transferred, four hydrogen ions are translocated across the cytoplasmic membrane), and thus conserves the redox energy in a proton gradient.</text>
</comment>
<comment type="catalytic activity">
    <reaction evidence="1">
        <text>a quinone + NADH + 5 H(+)(in) = a quinol + NAD(+) + 4 H(+)(out)</text>
        <dbReference type="Rhea" id="RHEA:57888"/>
        <dbReference type="ChEBI" id="CHEBI:15378"/>
        <dbReference type="ChEBI" id="CHEBI:24646"/>
        <dbReference type="ChEBI" id="CHEBI:57540"/>
        <dbReference type="ChEBI" id="CHEBI:57945"/>
        <dbReference type="ChEBI" id="CHEBI:132124"/>
    </reaction>
</comment>
<comment type="cofactor">
    <cofactor evidence="1">
        <name>[4Fe-4S] cluster</name>
        <dbReference type="ChEBI" id="CHEBI:49883"/>
    </cofactor>
    <text evidence="1">Binds 2 [4Fe-4S] clusters per subunit.</text>
</comment>
<comment type="subunit">
    <text evidence="1">NDH-1 is composed of 14 different subunits. Subunits NuoA, H, J, K, L, M, N constitute the membrane sector of the complex.</text>
</comment>
<comment type="subcellular location">
    <subcellularLocation>
        <location evidence="1">Cell membrane</location>
        <topology evidence="1">Peripheral membrane protein</topology>
    </subcellularLocation>
</comment>
<comment type="similarity">
    <text evidence="1">Belongs to the complex I 23 kDa subunit family.</text>
</comment>
<feature type="chain" id="PRO_0000245725" description="NADH-quinone oxidoreductase subunit I">
    <location>
        <begin position="1"/>
        <end position="198"/>
    </location>
</feature>
<feature type="domain" description="4Fe-4S ferredoxin-type 1" evidence="1">
    <location>
        <begin position="42"/>
        <end position="72"/>
    </location>
</feature>
<feature type="domain" description="4Fe-4S ferredoxin-type 2" evidence="1">
    <location>
        <begin position="88"/>
        <end position="117"/>
    </location>
</feature>
<feature type="region of interest" description="Disordered" evidence="2">
    <location>
        <begin position="137"/>
        <end position="198"/>
    </location>
</feature>
<feature type="compositionally biased region" description="Basic and acidic residues" evidence="2">
    <location>
        <begin position="182"/>
        <end position="198"/>
    </location>
</feature>
<feature type="binding site" evidence="1">
    <location>
        <position position="52"/>
    </location>
    <ligand>
        <name>[4Fe-4S] cluster</name>
        <dbReference type="ChEBI" id="CHEBI:49883"/>
        <label>1</label>
    </ligand>
</feature>
<feature type="binding site" evidence="1">
    <location>
        <position position="55"/>
    </location>
    <ligand>
        <name>[4Fe-4S] cluster</name>
        <dbReference type="ChEBI" id="CHEBI:49883"/>
        <label>1</label>
    </ligand>
</feature>
<feature type="binding site" evidence="1">
    <location>
        <position position="58"/>
    </location>
    <ligand>
        <name>[4Fe-4S] cluster</name>
        <dbReference type="ChEBI" id="CHEBI:49883"/>
        <label>1</label>
    </ligand>
</feature>
<feature type="binding site" evidence="1">
    <location>
        <position position="62"/>
    </location>
    <ligand>
        <name>[4Fe-4S] cluster</name>
        <dbReference type="ChEBI" id="CHEBI:49883"/>
        <label>2</label>
    </ligand>
</feature>
<feature type="binding site" evidence="1">
    <location>
        <position position="97"/>
    </location>
    <ligand>
        <name>[4Fe-4S] cluster</name>
        <dbReference type="ChEBI" id="CHEBI:49883"/>
        <label>2</label>
    </ligand>
</feature>
<feature type="binding site" evidence="1">
    <location>
        <position position="100"/>
    </location>
    <ligand>
        <name>[4Fe-4S] cluster</name>
        <dbReference type="ChEBI" id="CHEBI:49883"/>
        <label>2</label>
    </ligand>
</feature>
<feature type="binding site" evidence="1">
    <location>
        <position position="103"/>
    </location>
    <ligand>
        <name>[4Fe-4S] cluster</name>
        <dbReference type="ChEBI" id="CHEBI:49883"/>
        <label>2</label>
    </ligand>
</feature>
<feature type="binding site" evidence="1">
    <location>
        <position position="107"/>
    </location>
    <ligand>
        <name>[4Fe-4S] cluster</name>
        <dbReference type="ChEBI" id="CHEBI:49883"/>
        <label>1</label>
    </ligand>
</feature>
<gene>
    <name evidence="1" type="primary">nuoI</name>
    <name type="ordered locus">PPA1928</name>
</gene>
<dbReference type="EC" id="7.1.1.-" evidence="1"/>
<dbReference type="EMBL" id="AE017283">
    <property type="protein sequence ID" value="AAT83647.1"/>
    <property type="molecule type" value="Genomic_DNA"/>
</dbReference>
<dbReference type="RefSeq" id="WP_002515396.1">
    <property type="nucleotide sequence ID" value="NZ_CP025935.1"/>
</dbReference>
<dbReference type="SMR" id="Q6A6G6"/>
<dbReference type="EnsemblBacteria" id="AAT83647">
    <property type="protein sequence ID" value="AAT83647"/>
    <property type="gene ID" value="PPA1928"/>
</dbReference>
<dbReference type="GeneID" id="92857872"/>
<dbReference type="KEGG" id="pac:PPA1928"/>
<dbReference type="eggNOG" id="COG1143">
    <property type="taxonomic scope" value="Bacteria"/>
</dbReference>
<dbReference type="HOGENOM" id="CLU_067218_4_0_11"/>
<dbReference type="Proteomes" id="UP000000603">
    <property type="component" value="Chromosome"/>
</dbReference>
<dbReference type="GO" id="GO:0005886">
    <property type="term" value="C:plasma membrane"/>
    <property type="evidence" value="ECO:0007669"/>
    <property type="project" value="UniProtKB-SubCell"/>
</dbReference>
<dbReference type="GO" id="GO:0051539">
    <property type="term" value="F:4 iron, 4 sulfur cluster binding"/>
    <property type="evidence" value="ECO:0007669"/>
    <property type="project" value="UniProtKB-KW"/>
</dbReference>
<dbReference type="GO" id="GO:0005506">
    <property type="term" value="F:iron ion binding"/>
    <property type="evidence" value="ECO:0007669"/>
    <property type="project" value="UniProtKB-UniRule"/>
</dbReference>
<dbReference type="GO" id="GO:0050136">
    <property type="term" value="F:NADH:ubiquinone reductase (non-electrogenic) activity"/>
    <property type="evidence" value="ECO:0007669"/>
    <property type="project" value="UniProtKB-UniRule"/>
</dbReference>
<dbReference type="GO" id="GO:0048038">
    <property type="term" value="F:quinone binding"/>
    <property type="evidence" value="ECO:0007669"/>
    <property type="project" value="UniProtKB-KW"/>
</dbReference>
<dbReference type="GO" id="GO:0009060">
    <property type="term" value="P:aerobic respiration"/>
    <property type="evidence" value="ECO:0007669"/>
    <property type="project" value="TreeGrafter"/>
</dbReference>
<dbReference type="FunFam" id="3.30.70.3270:FF:000007">
    <property type="entry name" value="NADH-quinone oxidoreductase subunit I"/>
    <property type="match status" value="1"/>
</dbReference>
<dbReference type="Gene3D" id="3.30.70.3270">
    <property type="match status" value="1"/>
</dbReference>
<dbReference type="HAMAP" id="MF_01351">
    <property type="entry name" value="NDH1_NuoI"/>
    <property type="match status" value="1"/>
</dbReference>
<dbReference type="InterPro" id="IPR017896">
    <property type="entry name" value="4Fe4S_Fe-S-bd"/>
</dbReference>
<dbReference type="InterPro" id="IPR017900">
    <property type="entry name" value="4Fe4S_Fe_S_CS"/>
</dbReference>
<dbReference type="InterPro" id="IPR010226">
    <property type="entry name" value="NADH_quinone_OxRdtase_chainI"/>
</dbReference>
<dbReference type="NCBIfam" id="TIGR01971">
    <property type="entry name" value="NuoI"/>
    <property type="match status" value="1"/>
</dbReference>
<dbReference type="NCBIfam" id="NF004537">
    <property type="entry name" value="PRK05888.1-3"/>
    <property type="match status" value="1"/>
</dbReference>
<dbReference type="PANTHER" id="PTHR10849:SF20">
    <property type="entry name" value="NADH DEHYDROGENASE [UBIQUINONE] IRON-SULFUR PROTEIN 8, MITOCHONDRIAL"/>
    <property type="match status" value="1"/>
</dbReference>
<dbReference type="PANTHER" id="PTHR10849">
    <property type="entry name" value="NADH DEHYDROGENASE UBIQUINONE IRON-SULFUR PROTEIN 8, MITOCHONDRIAL"/>
    <property type="match status" value="1"/>
</dbReference>
<dbReference type="Pfam" id="PF12838">
    <property type="entry name" value="Fer4_7"/>
    <property type="match status" value="1"/>
</dbReference>
<dbReference type="SUPFAM" id="SSF54862">
    <property type="entry name" value="4Fe-4S ferredoxins"/>
    <property type="match status" value="1"/>
</dbReference>
<dbReference type="PROSITE" id="PS00198">
    <property type="entry name" value="4FE4S_FER_1"/>
    <property type="match status" value="2"/>
</dbReference>
<dbReference type="PROSITE" id="PS51379">
    <property type="entry name" value="4FE4S_FER_2"/>
    <property type="match status" value="2"/>
</dbReference>
<evidence type="ECO:0000255" key="1">
    <source>
        <dbReference type="HAMAP-Rule" id="MF_01351"/>
    </source>
</evidence>
<evidence type="ECO:0000256" key="2">
    <source>
        <dbReference type="SAM" id="MobiDB-lite"/>
    </source>
</evidence>
<proteinExistence type="inferred from homology"/>
<protein>
    <recommendedName>
        <fullName evidence="1">NADH-quinone oxidoreductase subunit I</fullName>
        <ecNumber evidence="1">7.1.1.-</ecNumber>
    </recommendedName>
    <alternativeName>
        <fullName evidence="1">NADH dehydrogenase I subunit I</fullName>
    </alternativeName>
    <alternativeName>
        <fullName evidence="1">NDH-1 subunit I</fullName>
    </alternativeName>
</protein>
<name>NUOI_CUTAK</name>
<organism>
    <name type="scientific">Cutibacterium acnes (strain DSM 16379 / KPA171202)</name>
    <name type="common">Propionibacterium acnes</name>
    <dbReference type="NCBI Taxonomy" id="267747"/>
    <lineage>
        <taxon>Bacteria</taxon>
        <taxon>Bacillati</taxon>
        <taxon>Actinomycetota</taxon>
        <taxon>Actinomycetes</taxon>
        <taxon>Propionibacteriales</taxon>
        <taxon>Propionibacteriaceae</taxon>
        <taxon>Cutibacterium</taxon>
    </lineage>
</organism>
<keyword id="KW-0004">4Fe-4S</keyword>
<keyword id="KW-1003">Cell membrane</keyword>
<keyword id="KW-0408">Iron</keyword>
<keyword id="KW-0411">Iron-sulfur</keyword>
<keyword id="KW-0472">Membrane</keyword>
<keyword id="KW-0479">Metal-binding</keyword>
<keyword id="KW-0520">NAD</keyword>
<keyword id="KW-0874">Quinone</keyword>
<keyword id="KW-0677">Repeat</keyword>
<keyword id="KW-1278">Translocase</keyword>
<keyword id="KW-0830">Ubiquinone</keyword>
<accession>Q6A6G6</accession>
<reference key="1">
    <citation type="journal article" date="2004" name="Science">
        <title>The complete genome sequence of Propionibacterium acnes, a commensal of human skin.</title>
        <authorList>
            <person name="Brueggemann H."/>
            <person name="Henne A."/>
            <person name="Hoster F."/>
            <person name="Liesegang H."/>
            <person name="Wiezer A."/>
            <person name="Strittmatter A."/>
            <person name="Hujer S."/>
            <person name="Duerre P."/>
            <person name="Gottschalk G."/>
        </authorList>
    </citation>
    <scope>NUCLEOTIDE SEQUENCE [LARGE SCALE GENOMIC DNA]</scope>
    <source>
        <strain>DSM 16379 / KPA171202</strain>
    </source>
</reference>